<reference key="1">
    <citation type="journal article" date="2003" name="Appl. Microbiol. Biotechnol.">
        <title>The Corynebacterium glutamicum genome: features and impacts on biotechnological processes.</title>
        <authorList>
            <person name="Ikeda M."/>
            <person name="Nakagawa S."/>
        </authorList>
    </citation>
    <scope>NUCLEOTIDE SEQUENCE [LARGE SCALE GENOMIC DNA]</scope>
    <source>
        <strain>ATCC 13032 / DSM 20300 / JCM 1318 / BCRC 11384 / CCUG 27702 / LMG 3730 / NBRC 12168 / NCIMB 10025 / NRRL B-2784 / 534</strain>
    </source>
</reference>
<reference key="2">
    <citation type="journal article" date="2003" name="J. Biotechnol.">
        <title>The complete Corynebacterium glutamicum ATCC 13032 genome sequence and its impact on the production of L-aspartate-derived amino acids and vitamins.</title>
        <authorList>
            <person name="Kalinowski J."/>
            <person name="Bathe B."/>
            <person name="Bartels D."/>
            <person name="Bischoff N."/>
            <person name="Bott M."/>
            <person name="Burkovski A."/>
            <person name="Dusch N."/>
            <person name="Eggeling L."/>
            <person name="Eikmanns B.J."/>
            <person name="Gaigalat L."/>
            <person name="Goesmann A."/>
            <person name="Hartmann M."/>
            <person name="Huthmacher K."/>
            <person name="Kraemer R."/>
            <person name="Linke B."/>
            <person name="McHardy A.C."/>
            <person name="Meyer F."/>
            <person name="Moeckel B."/>
            <person name="Pfefferle W."/>
            <person name="Puehler A."/>
            <person name="Rey D.A."/>
            <person name="Rueckert C."/>
            <person name="Rupp O."/>
            <person name="Sahm H."/>
            <person name="Wendisch V.F."/>
            <person name="Wiegraebe I."/>
            <person name="Tauch A."/>
        </authorList>
    </citation>
    <scope>NUCLEOTIDE SEQUENCE [LARGE SCALE GENOMIC DNA]</scope>
    <source>
        <strain>ATCC 13032 / DSM 20300 / JCM 1318 / BCRC 11384 / CCUG 27702 / LMG 3730 / NBRC 12168 / NCIMB 10025 / NRRL B-2784 / 534</strain>
    </source>
</reference>
<gene>
    <name evidence="1" type="primary">pgi</name>
    <name type="ordered locus">Cgl0851</name>
    <name type="ordered locus">cg0973</name>
</gene>
<feature type="chain" id="PRO_0000180633" description="Glucose-6-phosphate isomerase">
    <location>
        <begin position="1"/>
        <end position="540"/>
    </location>
</feature>
<feature type="active site" description="Proton donor" evidence="1">
    <location>
        <position position="351"/>
    </location>
</feature>
<feature type="active site" evidence="1">
    <location>
        <position position="382"/>
    </location>
</feature>
<feature type="active site" evidence="1">
    <location>
        <position position="506"/>
    </location>
</feature>
<evidence type="ECO:0000255" key="1">
    <source>
        <dbReference type="HAMAP-Rule" id="MF_00473"/>
    </source>
</evidence>
<protein>
    <recommendedName>
        <fullName evidence="1">Glucose-6-phosphate isomerase</fullName>
        <shortName evidence="1">GPI</shortName>
        <ecNumber evidence="1">5.3.1.9</ecNumber>
    </recommendedName>
    <alternativeName>
        <fullName evidence="1">Phosphoglucose isomerase</fullName>
        <shortName evidence="1">PGI</shortName>
    </alternativeName>
    <alternativeName>
        <fullName evidence="1">Phosphohexose isomerase</fullName>
        <shortName evidence="1">PHI</shortName>
    </alternativeName>
</protein>
<dbReference type="EC" id="5.3.1.9" evidence="1"/>
<dbReference type="EMBL" id="BA000036">
    <property type="protein sequence ID" value="BAB98244.1"/>
    <property type="molecule type" value="Genomic_DNA"/>
</dbReference>
<dbReference type="EMBL" id="BX927150">
    <property type="protein sequence ID" value="CAF19557.1"/>
    <property type="molecule type" value="Genomic_DNA"/>
</dbReference>
<dbReference type="RefSeq" id="NP_600080.1">
    <property type="nucleotide sequence ID" value="NC_003450.3"/>
</dbReference>
<dbReference type="RefSeq" id="WP_011013928.1">
    <property type="nucleotide sequence ID" value="NC_006958.1"/>
</dbReference>
<dbReference type="SMR" id="Q8NS31"/>
<dbReference type="STRING" id="196627.cg0973"/>
<dbReference type="GeneID" id="1018846"/>
<dbReference type="KEGG" id="cgb:cg0973"/>
<dbReference type="KEGG" id="cgl:Cgl0851"/>
<dbReference type="PATRIC" id="fig|196627.13.peg.836"/>
<dbReference type="eggNOG" id="COG0166">
    <property type="taxonomic scope" value="Bacteria"/>
</dbReference>
<dbReference type="HOGENOM" id="CLU_017947_3_1_11"/>
<dbReference type="OrthoDB" id="140919at2"/>
<dbReference type="BioCyc" id="CORYNE:G18NG-10421-MONOMER"/>
<dbReference type="UniPathway" id="UPA00109">
    <property type="reaction ID" value="UER00181"/>
</dbReference>
<dbReference type="UniPathway" id="UPA00138"/>
<dbReference type="Proteomes" id="UP000000582">
    <property type="component" value="Chromosome"/>
</dbReference>
<dbReference type="Proteomes" id="UP000001009">
    <property type="component" value="Chromosome"/>
</dbReference>
<dbReference type="GO" id="GO:0005829">
    <property type="term" value="C:cytosol"/>
    <property type="evidence" value="ECO:0007669"/>
    <property type="project" value="TreeGrafter"/>
</dbReference>
<dbReference type="GO" id="GO:0097367">
    <property type="term" value="F:carbohydrate derivative binding"/>
    <property type="evidence" value="ECO:0007669"/>
    <property type="project" value="InterPro"/>
</dbReference>
<dbReference type="GO" id="GO:0004347">
    <property type="term" value="F:glucose-6-phosphate isomerase activity"/>
    <property type="evidence" value="ECO:0007669"/>
    <property type="project" value="UniProtKB-UniRule"/>
</dbReference>
<dbReference type="GO" id="GO:0048029">
    <property type="term" value="F:monosaccharide binding"/>
    <property type="evidence" value="ECO:0007669"/>
    <property type="project" value="TreeGrafter"/>
</dbReference>
<dbReference type="GO" id="GO:0006094">
    <property type="term" value="P:gluconeogenesis"/>
    <property type="evidence" value="ECO:0007669"/>
    <property type="project" value="UniProtKB-UniRule"/>
</dbReference>
<dbReference type="GO" id="GO:0051156">
    <property type="term" value="P:glucose 6-phosphate metabolic process"/>
    <property type="evidence" value="ECO:0007669"/>
    <property type="project" value="TreeGrafter"/>
</dbReference>
<dbReference type="GO" id="GO:0006096">
    <property type="term" value="P:glycolytic process"/>
    <property type="evidence" value="ECO:0007669"/>
    <property type="project" value="UniProtKB-UniRule"/>
</dbReference>
<dbReference type="CDD" id="cd05015">
    <property type="entry name" value="SIS_PGI_1"/>
    <property type="match status" value="1"/>
</dbReference>
<dbReference type="CDD" id="cd05016">
    <property type="entry name" value="SIS_PGI_2"/>
    <property type="match status" value="1"/>
</dbReference>
<dbReference type="FunFam" id="3.40.50.10490:FF:000018">
    <property type="entry name" value="Glucose-6-phosphate isomerase"/>
    <property type="match status" value="1"/>
</dbReference>
<dbReference type="Gene3D" id="1.10.1390.10">
    <property type="match status" value="1"/>
</dbReference>
<dbReference type="Gene3D" id="3.40.50.10490">
    <property type="entry name" value="Glucose-6-phosphate isomerase like protein, domain 1"/>
    <property type="match status" value="2"/>
</dbReference>
<dbReference type="HAMAP" id="MF_00473">
    <property type="entry name" value="G6P_isomerase"/>
    <property type="match status" value="1"/>
</dbReference>
<dbReference type="InterPro" id="IPR001672">
    <property type="entry name" value="G6P_Isomerase"/>
</dbReference>
<dbReference type="InterPro" id="IPR023096">
    <property type="entry name" value="G6P_Isomerase_C"/>
</dbReference>
<dbReference type="InterPro" id="IPR018189">
    <property type="entry name" value="Phosphoglucose_isomerase_CS"/>
</dbReference>
<dbReference type="InterPro" id="IPR046348">
    <property type="entry name" value="SIS_dom_sf"/>
</dbReference>
<dbReference type="InterPro" id="IPR035476">
    <property type="entry name" value="SIS_PGI_1"/>
</dbReference>
<dbReference type="InterPro" id="IPR035482">
    <property type="entry name" value="SIS_PGI_2"/>
</dbReference>
<dbReference type="NCBIfam" id="NF001211">
    <property type="entry name" value="PRK00179.1"/>
    <property type="match status" value="1"/>
</dbReference>
<dbReference type="PANTHER" id="PTHR11469">
    <property type="entry name" value="GLUCOSE-6-PHOSPHATE ISOMERASE"/>
    <property type="match status" value="1"/>
</dbReference>
<dbReference type="PANTHER" id="PTHR11469:SF1">
    <property type="entry name" value="GLUCOSE-6-PHOSPHATE ISOMERASE"/>
    <property type="match status" value="1"/>
</dbReference>
<dbReference type="Pfam" id="PF00342">
    <property type="entry name" value="PGI"/>
    <property type="match status" value="1"/>
</dbReference>
<dbReference type="PRINTS" id="PR00662">
    <property type="entry name" value="G6PISOMERASE"/>
</dbReference>
<dbReference type="SUPFAM" id="SSF53697">
    <property type="entry name" value="SIS domain"/>
    <property type="match status" value="1"/>
</dbReference>
<dbReference type="PROSITE" id="PS00765">
    <property type="entry name" value="P_GLUCOSE_ISOMERASE_1"/>
    <property type="match status" value="1"/>
</dbReference>
<dbReference type="PROSITE" id="PS00174">
    <property type="entry name" value="P_GLUCOSE_ISOMERASE_2"/>
    <property type="match status" value="1"/>
</dbReference>
<dbReference type="PROSITE" id="PS51463">
    <property type="entry name" value="P_GLUCOSE_ISOMERASE_3"/>
    <property type="match status" value="1"/>
</dbReference>
<sequence length="540" mass="59166">MADISTTQVWQDLTDHYSNFQATTLRELFKEENRAEKYTFSAAGLHVDLSKNLLDDATLTKLLALTEESGLRERIDAMFAGEHLNNTEDRAVLHTALRLPAEADLSVDGQDVAADVHEVLGRMRDFATALRSGNWLGHTGHTIKKIVNIGIGGSDLGPAMATKALRAYATAGISAEFVSNVDPADLVSVLEDLDAESTLFVIASKTFTTQETLSNARAARAWLVEKLGEEAVAKHFVAVSTNAEKVAEFGIDTDNMFGFWDWVGGRYSVDSAVGLSLMAVIGPRDFMRFLGGFHAMDEHFRTTKFEENVPILMALLGVWYSDFYGAETHAVLPYSEDLSRFAAYLQQLTMESNGKSVHRDGSPVSTGTGEIYWGEPGTNGQHAFFQLIHQGTRLVPADFIGFARPKQDLPAGERTMHDLLMSNFFAQTKVLAFGKNAEEIAAEGVAPELVNHKVMPGNRPTTTILAEELTPSILGALIALYEHIVMVQGVIWDINSFDQWGVELGKQQANDLAPAVSGEEDVDSGDSSTDSLIKWYRANR</sequence>
<name>G6PI_CORGL</name>
<comment type="function">
    <text evidence="1">Catalyzes the reversible isomerization of glucose-6-phosphate to fructose-6-phosphate.</text>
</comment>
<comment type="catalytic activity">
    <reaction evidence="1">
        <text>alpha-D-glucose 6-phosphate = beta-D-fructose 6-phosphate</text>
        <dbReference type="Rhea" id="RHEA:11816"/>
        <dbReference type="ChEBI" id="CHEBI:57634"/>
        <dbReference type="ChEBI" id="CHEBI:58225"/>
        <dbReference type="EC" id="5.3.1.9"/>
    </reaction>
</comment>
<comment type="pathway">
    <text evidence="1">Carbohydrate biosynthesis; gluconeogenesis.</text>
</comment>
<comment type="pathway">
    <text evidence="1">Carbohydrate degradation; glycolysis; D-glyceraldehyde 3-phosphate and glycerone phosphate from D-glucose: step 2/4.</text>
</comment>
<comment type="subcellular location">
    <subcellularLocation>
        <location evidence="1">Cytoplasm</location>
    </subcellularLocation>
</comment>
<comment type="similarity">
    <text evidence="1">Belongs to the GPI family.</text>
</comment>
<organism>
    <name type="scientific">Corynebacterium glutamicum (strain ATCC 13032 / DSM 20300 / JCM 1318 / BCRC 11384 / CCUG 27702 / LMG 3730 / NBRC 12168 / NCIMB 10025 / NRRL B-2784 / 534)</name>
    <dbReference type="NCBI Taxonomy" id="196627"/>
    <lineage>
        <taxon>Bacteria</taxon>
        <taxon>Bacillati</taxon>
        <taxon>Actinomycetota</taxon>
        <taxon>Actinomycetes</taxon>
        <taxon>Mycobacteriales</taxon>
        <taxon>Corynebacteriaceae</taxon>
        <taxon>Corynebacterium</taxon>
    </lineage>
</organism>
<keyword id="KW-0963">Cytoplasm</keyword>
<keyword id="KW-0312">Gluconeogenesis</keyword>
<keyword id="KW-0324">Glycolysis</keyword>
<keyword id="KW-0413">Isomerase</keyword>
<keyword id="KW-1185">Reference proteome</keyword>
<accession>Q8NS31</accession>
<proteinExistence type="inferred from homology"/>